<comment type="catalytic activity">
    <reaction evidence="1">
        <text>urea + 2 H2O + H(+) = hydrogencarbonate + 2 NH4(+)</text>
        <dbReference type="Rhea" id="RHEA:20557"/>
        <dbReference type="ChEBI" id="CHEBI:15377"/>
        <dbReference type="ChEBI" id="CHEBI:15378"/>
        <dbReference type="ChEBI" id="CHEBI:16199"/>
        <dbReference type="ChEBI" id="CHEBI:17544"/>
        <dbReference type="ChEBI" id="CHEBI:28938"/>
        <dbReference type="EC" id="3.5.1.5"/>
    </reaction>
</comment>
<comment type="cofactor">
    <cofactor evidence="1">
        <name>Ni cation</name>
        <dbReference type="ChEBI" id="CHEBI:25516"/>
    </cofactor>
    <text evidence="1">Binds 2 nickel ions per subunit.</text>
</comment>
<comment type="pathway">
    <text evidence="1">Nitrogen metabolism; urea degradation; CO(2) and NH(3) from urea (urease route): step 1/1.</text>
</comment>
<comment type="subunit">
    <text evidence="1">Heterotrimer of UreA (gamma), UreB (beta) and UreC (alpha) subunits. Three heterotrimers associate to form the active enzyme.</text>
</comment>
<comment type="subcellular location">
    <subcellularLocation>
        <location evidence="1">Cytoplasm</location>
    </subcellularLocation>
</comment>
<comment type="PTM">
    <text evidence="1">Carboxylation allows a single lysine to coordinate two nickel ions.</text>
</comment>
<comment type="similarity">
    <text evidence="1">Belongs to the metallo-dependent hydrolases superfamily. Urease alpha subunit family.</text>
</comment>
<sequence length="567" mass="60484">MSRISRQAYADMFGPTVGDRVRLADTALWVEVEKDFTVYGEEVKFGGGKVIRDGMGQGQMLAAEAMDLVLTNALIIDHWGIVKADIGVKHGRIAAIGKAGNPDVQPGVSVPVGPGTEVIAAEGKIVTAGGIDSHIHFICPQQVEEALTSGVTTFIGGGTGPATGTNATTCTPGPWYLARMLQAADSLPINIGLLGKGNASRPEALREQITAGAVGLKLHEDWGSTPAAIDCCLGVAEEMDIQVAIHTDTLNESGCIEDTLSAIGDRTIHTFHTEGAGGGHAPDIIRAAGQANVLPSSTNPTLPYTVNTVDEHLDMLMVCHHLDPSIAEDVAFAESRIRRETIAAEDILHDMGAFAMTSSDSQAMGRVGEVVLRTWQVAHQMKLRRGPLAPDGSYSDNFRVKRYIAKYTINPALTHGIAHEVGSVEVGKLADLVLWAPAFFAVKPALVLKGGMIATAPMGDINGSIPTPQPVHYRPMFGALGAARHTTRMTFLPQAAMDRGLAEELNLQSLIGVAHGCRRVRKADMVHNTLQPLIEVDAQTYQVRADGELLVCEPARELPLAQRYFLF</sequence>
<accession>Q1IBP0</accession>
<keyword id="KW-0963">Cytoplasm</keyword>
<keyword id="KW-0378">Hydrolase</keyword>
<keyword id="KW-0479">Metal-binding</keyword>
<keyword id="KW-0533">Nickel</keyword>
<organism>
    <name type="scientific">Pseudomonas entomophila (strain L48)</name>
    <dbReference type="NCBI Taxonomy" id="384676"/>
    <lineage>
        <taxon>Bacteria</taxon>
        <taxon>Pseudomonadati</taxon>
        <taxon>Pseudomonadota</taxon>
        <taxon>Gammaproteobacteria</taxon>
        <taxon>Pseudomonadales</taxon>
        <taxon>Pseudomonadaceae</taxon>
        <taxon>Pseudomonas</taxon>
    </lineage>
</organism>
<dbReference type="EC" id="3.5.1.5" evidence="1"/>
<dbReference type="EMBL" id="CT573326">
    <property type="protein sequence ID" value="CAK14925.1"/>
    <property type="molecule type" value="Genomic_DNA"/>
</dbReference>
<dbReference type="RefSeq" id="WP_011533328.1">
    <property type="nucleotide sequence ID" value="NC_008027.1"/>
</dbReference>
<dbReference type="SMR" id="Q1IBP0"/>
<dbReference type="STRING" id="384676.PSEEN2096"/>
<dbReference type="GeneID" id="32805304"/>
<dbReference type="KEGG" id="pen:PSEEN2096"/>
<dbReference type="eggNOG" id="COG0804">
    <property type="taxonomic scope" value="Bacteria"/>
</dbReference>
<dbReference type="HOGENOM" id="CLU_000980_0_0_6"/>
<dbReference type="OrthoDB" id="9802793at2"/>
<dbReference type="UniPathway" id="UPA00258">
    <property type="reaction ID" value="UER00370"/>
</dbReference>
<dbReference type="Proteomes" id="UP000000658">
    <property type="component" value="Chromosome"/>
</dbReference>
<dbReference type="GO" id="GO:0005737">
    <property type="term" value="C:cytoplasm"/>
    <property type="evidence" value="ECO:0007669"/>
    <property type="project" value="UniProtKB-SubCell"/>
</dbReference>
<dbReference type="GO" id="GO:0016151">
    <property type="term" value="F:nickel cation binding"/>
    <property type="evidence" value="ECO:0007669"/>
    <property type="project" value="UniProtKB-UniRule"/>
</dbReference>
<dbReference type="GO" id="GO:0009039">
    <property type="term" value="F:urease activity"/>
    <property type="evidence" value="ECO:0007669"/>
    <property type="project" value="UniProtKB-UniRule"/>
</dbReference>
<dbReference type="GO" id="GO:0043419">
    <property type="term" value="P:urea catabolic process"/>
    <property type="evidence" value="ECO:0007669"/>
    <property type="project" value="UniProtKB-UniRule"/>
</dbReference>
<dbReference type="CDD" id="cd00375">
    <property type="entry name" value="Urease_alpha"/>
    <property type="match status" value="1"/>
</dbReference>
<dbReference type="Gene3D" id="3.20.20.140">
    <property type="entry name" value="Metal-dependent hydrolases"/>
    <property type="match status" value="1"/>
</dbReference>
<dbReference type="Gene3D" id="2.30.40.10">
    <property type="entry name" value="Urease, subunit C, domain 1"/>
    <property type="match status" value="1"/>
</dbReference>
<dbReference type="HAMAP" id="MF_01953">
    <property type="entry name" value="Urease_alpha"/>
    <property type="match status" value="1"/>
</dbReference>
<dbReference type="InterPro" id="IPR006680">
    <property type="entry name" value="Amidohydro-rel"/>
</dbReference>
<dbReference type="InterPro" id="IPR011059">
    <property type="entry name" value="Metal-dep_hydrolase_composite"/>
</dbReference>
<dbReference type="InterPro" id="IPR032466">
    <property type="entry name" value="Metal_Hydrolase"/>
</dbReference>
<dbReference type="InterPro" id="IPR011612">
    <property type="entry name" value="Urease_alpha_N_dom"/>
</dbReference>
<dbReference type="InterPro" id="IPR050112">
    <property type="entry name" value="Urease_alpha_subunit"/>
</dbReference>
<dbReference type="InterPro" id="IPR017950">
    <property type="entry name" value="Urease_AS"/>
</dbReference>
<dbReference type="InterPro" id="IPR005848">
    <property type="entry name" value="Urease_asu"/>
</dbReference>
<dbReference type="InterPro" id="IPR017951">
    <property type="entry name" value="Urease_asu_c"/>
</dbReference>
<dbReference type="InterPro" id="IPR029754">
    <property type="entry name" value="Urease_Ni-bd"/>
</dbReference>
<dbReference type="NCBIfam" id="NF009685">
    <property type="entry name" value="PRK13206.1"/>
    <property type="match status" value="1"/>
</dbReference>
<dbReference type="NCBIfam" id="NF009686">
    <property type="entry name" value="PRK13207.1"/>
    <property type="match status" value="1"/>
</dbReference>
<dbReference type="NCBIfam" id="TIGR01792">
    <property type="entry name" value="urease_alph"/>
    <property type="match status" value="1"/>
</dbReference>
<dbReference type="PANTHER" id="PTHR43440">
    <property type="entry name" value="UREASE"/>
    <property type="match status" value="1"/>
</dbReference>
<dbReference type="PANTHER" id="PTHR43440:SF1">
    <property type="entry name" value="UREASE"/>
    <property type="match status" value="1"/>
</dbReference>
<dbReference type="Pfam" id="PF01979">
    <property type="entry name" value="Amidohydro_1"/>
    <property type="match status" value="1"/>
</dbReference>
<dbReference type="Pfam" id="PF00449">
    <property type="entry name" value="Urease_alpha"/>
    <property type="match status" value="1"/>
</dbReference>
<dbReference type="PRINTS" id="PR01752">
    <property type="entry name" value="UREASE"/>
</dbReference>
<dbReference type="SUPFAM" id="SSF51338">
    <property type="entry name" value="Composite domain of metallo-dependent hydrolases"/>
    <property type="match status" value="2"/>
</dbReference>
<dbReference type="SUPFAM" id="SSF51556">
    <property type="entry name" value="Metallo-dependent hydrolases"/>
    <property type="match status" value="1"/>
</dbReference>
<dbReference type="PROSITE" id="PS01120">
    <property type="entry name" value="UREASE_1"/>
    <property type="match status" value="1"/>
</dbReference>
<dbReference type="PROSITE" id="PS00145">
    <property type="entry name" value="UREASE_2"/>
    <property type="match status" value="1"/>
</dbReference>
<dbReference type="PROSITE" id="PS51368">
    <property type="entry name" value="UREASE_3"/>
    <property type="match status" value="1"/>
</dbReference>
<feature type="chain" id="PRO_1000070684" description="Urease subunit alpha">
    <location>
        <begin position="1"/>
        <end position="567"/>
    </location>
</feature>
<feature type="domain" description="Urease" evidence="1">
    <location>
        <begin position="129"/>
        <end position="567"/>
    </location>
</feature>
<feature type="active site" description="Proton donor" evidence="1">
    <location>
        <position position="320"/>
    </location>
</feature>
<feature type="binding site" evidence="1">
    <location>
        <position position="134"/>
    </location>
    <ligand>
        <name>Ni(2+)</name>
        <dbReference type="ChEBI" id="CHEBI:49786"/>
        <label>1</label>
    </ligand>
</feature>
<feature type="binding site" evidence="1">
    <location>
        <position position="136"/>
    </location>
    <ligand>
        <name>Ni(2+)</name>
        <dbReference type="ChEBI" id="CHEBI:49786"/>
        <label>1</label>
    </ligand>
</feature>
<feature type="binding site" description="via carbamate group" evidence="1">
    <location>
        <position position="217"/>
    </location>
    <ligand>
        <name>Ni(2+)</name>
        <dbReference type="ChEBI" id="CHEBI:49786"/>
        <label>1</label>
    </ligand>
</feature>
<feature type="binding site" description="via carbamate group" evidence="1">
    <location>
        <position position="217"/>
    </location>
    <ligand>
        <name>Ni(2+)</name>
        <dbReference type="ChEBI" id="CHEBI:49786"/>
        <label>2</label>
    </ligand>
</feature>
<feature type="binding site" evidence="1">
    <location>
        <position position="219"/>
    </location>
    <ligand>
        <name>substrate</name>
    </ligand>
</feature>
<feature type="binding site" evidence="1">
    <location>
        <position position="246"/>
    </location>
    <ligand>
        <name>Ni(2+)</name>
        <dbReference type="ChEBI" id="CHEBI:49786"/>
        <label>2</label>
    </ligand>
</feature>
<feature type="binding site" evidence="1">
    <location>
        <position position="272"/>
    </location>
    <ligand>
        <name>Ni(2+)</name>
        <dbReference type="ChEBI" id="CHEBI:49786"/>
        <label>2</label>
    </ligand>
</feature>
<feature type="binding site" evidence="1">
    <location>
        <position position="360"/>
    </location>
    <ligand>
        <name>Ni(2+)</name>
        <dbReference type="ChEBI" id="CHEBI:49786"/>
        <label>1</label>
    </ligand>
</feature>
<feature type="modified residue" description="N6-carboxylysine" evidence="1">
    <location>
        <position position="217"/>
    </location>
</feature>
<reference key="1">
    <citation type="journal article" date="2006" name="Nat. Biotechnol.">
        <title>Complete genome sequence of the entomopathogenic and metabolically versatile soil bacterium Pseudomonas entomophila.</title>
        <authorList>
            <person name="Vodovar N."/>
            <person name="Vallenet D."/>
            <person name="Cruveiller S."/>
            <person name="Rouy Z."/>
            <person name="Barbe V."/>
            <person name="Acosta C."/>
            <person name="Cattolico L."/>
            <person name="Jubin C."/>
            <person name="Lajus A."/>
            <person name="Segurens B."/>
            <person name="Vacherie B."/>
            <person name="Wincker P."/>
            <person name="Weissenbach J."/>
            <person name="Lemaitre B."/>
            <person name="Medigue C."/>
            <person name="Boccard F."/>
        </authorList>
    </citation>
    <scope>NUCLEOTIDE SEQUENCE [LARGE SCALE GENOMIC DNA]</scope>
    <source>
        <strain>L48</strain>
    </source>
</reference>
<protein>
    <recommendedName>
        <fullName evidence="1">Urease subunit alpha</fullName>
        <ecNumber evidence="1">3.5.1.5</ecNumber>
    </recommendedName>
    <alternativeName>
        <fullName evidence="1">Urea amidohydrolase subunit alpha</fullName>
    </alternativeName>
</protein>
<gene>
    <name evidence="1" type="primary">ureC</name>
    <name type="ordered locus">PSEEN2096</name>
</gene>
<proteinExistence type="inferred from homology"/>
<name>URE1_PSEE4</name>
<evidence type="ECO:0000255" key="1">
    <source>
        <dbReference type="HAMAP-Rule" id="MF_01953"/>
    </source>
</evidence>